<dbReference type="EMBL" id="AY964104">
    <property type="protein sequence ID" value="AAY32591.1"/>
    <property type="molecule type" value="mRNA"/>
</dbReference>
<dbReference type="RefSeq" id="NP_001090200.1">
    <property type="nucleotide sequence ID" value="NM_001096731.1"/>
</dbReference>
<dbReference type="SMR" id="Q0VH34"/>
<dbReference type="GeneID" id="779097"/>
<dbReference type="KEGG" id="xla:779097"/>
<dbReference type="AGR" id="Xenbase:XB-GENE-943720"/>
<dbReference type="CTD" id="779097"/>
<dbReference type="Xenbase" id="XB-GENE-943720">
    <property type="gene designation" value="mxd1.L"/>
</dbReference>
<dbReference type="OMA" id="ASKFQHE"/>
<dbReference type="OrthoDB" id="5920083at2759"/>
<dbReference type="Proteomes" id="UP000186698">
    <property type="component" value="Chromosome 3L"/>
</dbReference>
<dbReference type="Bgee" id="779097">
    <property type="expression patterns" value="Expressed in zone of skin and 19 other cell types or tissues"/>
</dbReference>
<dbReference type="GO" id="GO:0005634">
    <property type="term" value="C:nucleus"/>
    <property type="evidence" value="ECO:0007669"/>
    <property type="project" value="UniProtKB-SubCell"/>
</dbReference>
<dbReference type="GO" id="GO:0000981">
    <property type="term" value="F:DNA-binding transcription factor activity, RNA polymerase II-specific"/>
    <property type="evidence" value="ECO:0000318"/>
    <property type="project" value="GO_Central"/>
</dbReference>
<dbReference type="GO" id="GO:0046983">
    <property type="term" value="F:protein dimerization activity"/>
    <property type="evidence" value="ECO:0007669"/>
    <property type="project" value="InterPro"/>
</dbReference>
<dbReference type="GO" id="GO:0000978">
    <property type="term" value="F:RNA polymerase II cis-regulatory region sequence-specific DNA binding"/>
    <property type="evidence" value="ECO:0000318"/>
    <property type="project" value="GO_Central"/>
</dbReference>
<dbReference type="GO" id="GO:0000122">
    <property type="term" value="P:negative regulation of transcription by RNA polymerase II"/>
    <property type="evidence" value="ECO:0007669"/>
    <property type="project" value="InterPro"/>
</dbReference>
<dbReference type="GO" id="GO:0006357">
    <property type="term" value="P:regulation of transcription by RNA polymerase II"/>
    <property type="evidence" value="ECO:0000318"/>
    <property type="project" value="GO_Central"/>
</dbReference>
<dbReference type="CDD" id="cd18931">
    <property type="entry name" value="bHLHzip_Mad1"/>
    <property type="match status" value="1"/>
</dbReference>
<dbReference type="FunFam" id="4.10.280.10:FF:000014">
    <property type="entry name" value="Max dimerization protein 1"/>
    <property type="match status" value="1"/>
</dbReference>
<dbReference type="Gene3D" id="4.10.280.10">
    <property type="entry name" value="Helix-loop-helix DNA-binding domain"/>
    <property type="match status" value="1"/>
</dbReference>
<dbReference type="InterPro" id="IPR011598">
    <property type="entry name" value="bHLH_dom"/>
</dbReference>
<dbReference type="InterPro" id="IPR036638">
    <property type="entry name" value="HLH_DNA-bd_sf"/>
</dbReference>
<dbReference type="InterPro" id="IPR040157">
    <property type="entry name" value="MXD1_bHLHzip"/>
</dbReference>
<dbReference type="PANTHER" id="PTHR11969:SF18">
    <property type="entry name" value="MAX DIMERIZATION PROTEIN 1"/>
    <property type="match status" value="1"/>
</dbReference>
<dbReference type="PANTHER" id="PTHR11969">
    <property type="entry name" value="MAX DIMERIZATION, MAD"/>
    <property type="match status" value="1"/>
</dbReference>
<dbReference type="Pfam" id="PF00010">
    <property type="entry name" value="HLH"/>
    <property type="match status" value="1"/>
</dbReference>
<dbReference type="SMART" id="SM00353">
    <property type="entry name" value="HLH"/>
    <property type="match status" value="1"/>
</dbReference>
<dbReference type="SUPFAM" id="SSF47459">
    <property type="entry name" value="HLH, helix-loop-helix DNA-binding domain"/>
    <property type="match status" value="1"/>
</dbReference>
<dbReference type="PROSITE" id="PS50888">
    <property type="entry name" value="BHLH"/>
    <property type="match status" value="1"/>
</dbReference>
<evidence type="ECO:0000250" key="1">
    <source>
        <dbReference type="UniProtKB" id="Q05195"/>
    </source>
</evidence>
<evidence type="ECO:0000255" key="2"/>
<evidence type="ECO:0000255" key="3">
    <source>
        <dbReference type="PROSITE-ProRule" id="PRU00981"/>
    </source>
</evidence>
<evidence type="ECO:0000256" key="4">
    <source>
        <dbReference type="SAM" id="MobiDB-lite"/>
    </source>
</evidence>
<evidence type="ECO:0000269" key="5">
    <source>
    </source>
</evidence>
<reference key="1">
    <citation type="journal article" date="2005" name="Dev. Dyn.">
        <title>Isolation and comparative expression analysis of the Myc-regulatory proteins Mad1, Mad3, and Mnt during Xenopus development.</title>
        <authorList>
            <person name="Juergens K."/>
            <person name="Rust B."/>
            <person name="Pieler T."/>
            <person name="Henningfeld K.A."/>
        </authorList>
    </citation>
    <scope>NUCLEOTIDE SEQUENCE [MRNA]</scope>
    <scope>TISSUE SPECIFICITY</scope>
    <scope>DEVELOPMENTAL STAGE</scope>
</reference>
<organism>
    <name type="scientific">Xenopus laevis</name>
    <name type="common">African clawed frog</name>
    <dbReference type="NCBI Taxonomy" id="8355"/>
    <lineage>
        <taxon>Eukaryota</taxon>
        <taxon>Metazoa</taxon>
        <taxon>Chordata</taxon>
        <taxon>Craniata</taxon>
        <taxon>Vertebrata</taxon>
        <taxon>Euteleostomi</taxon>
        <taxon>Amphibia</taxon>
        <taxon>Batrachia</taxon>
        <taxon>Anura</taxon>
        <taxon>Pipoidea</taxon>
        <taxon>Pipidae</taxon>
        <taxon>Xenopodinae</taxon>
        <taxon>Xenopus</taxon>
        <taxon>Xenopus</taxon>
    </lineage>
</organism>
<gene>
    <name type="primary">mxd1</name>
    <name type="synonym">mad1</name>
</gene>
<name>MAD1_XENLA</name>
<proteinExistence type="evidence at transcript level"/>
<sequence length="221" mass="25233">MAAPVCVNIQMLLEAAEYLERREREAEHGYASMLPYNSKERDGLKRKSKSKKSSSSRSTHNEMEKNRRAHLRLCLEKLKMLVPLGPESNRHTTLSLLMRAKLHIKKLEDCDKRSVHQIEQLQREQRHLTRQLEKFGVERTRMDSIGSAMSSERSDSDREEIDVDVESTDYLTAELDWSSSSSSVSDLDERESMQSICSDEGYSSSGLKSIGLQNNPKSIAL</sequence>
<protein>
    <recommendedName>
        <fullName>Max dimerization protein 1</fullName>
        <shortName>Max dimerizer 1</shortName>
    </recommendedName>
    <alternativeName>
        <fullName>Protein MAD</fullName>
    </alternativeName>
</protein>
<comment type="function">
    <text evidence="1">Component of a transcriptional repressor complex together with MAX (By similarity). In complex with MAX binds to the core DNA sequence 5'-CAC[GA]TG-3' (By similarity). Antagonizes MYC transcriptional activity by competing with MYC for MAX binding (By similarity). Binds to the TERT promoter and represses telomerase expression, possibly by interfering with MYC binding (By similarity).</text>
</comment>
<comment type="subunit">
    <text evidence="1">Heterodimer with MAX; the interaction is required for DNA-binding (By similarity). DNA binding requires dimerization with another bHLH protein; does not form homodimers, and does not bind to DNA in the absence of MAX in vitro (By similarity).</text>
</comment>
<comment type="subcellular location">
    <subcellularLocation>
        <location evidence="3">Nucleus</location>
    </subcellularLocation>
</comment>
<comment type="tissue specificity">
    <text evidence="5">Expressed primarily in cells that have undergone terminal differentiation including notochord, floor plate and cement gland.</text>
</comment>
<comment type="developmental stage">
    <text evidence="5">Localized throughout the animal hemisphere of early cleavage stage embryos and becomes localized above the dorsal blastopore lip during early gastrulation. As gastrulation proceeds, the expression extends along the dorsal midline. In stage 17 embryos, expressed in the notochord and floor plate. At this stage, also detected in the cement gland, where they are maintained in later developmental stages. Additional expression is also detected in the pineal gland, as well as the trigeminal and geniculate ganglia. In stage 27 embryos, expressed in the floor plate and in addition, present in the hypochord and the marginal zone of the ventral neural tube where postmitotic neurons are located.</text>
</comment>
<accession>Q0VH34</accession>
<keyword id="KW-0238">DNA-binding</keyword>
<keyword id="KW-0539">Nucleus</keyword>
<keyword id="KW-1185">Reference proteome</keyword>
<keyword id="KW-0678">Repressor</keyword>
<keyword id="KW-0804">Transcription</keyword>
<keyword id="KW-0805">Transcription regulation</keyword>
<feature type="chain" id="PRO_0000253705" description="Max dimerization protein 1">
    <location>
        <begin position="1"/>
        <end position="221"/>
    </location>
</feature>
<feature type="domain" description="bHLH" evidence="3">
    <location>
        <begin position="55"/>
        <end position="107"/>
    </location>
</feature>
<feature type="region of interest" description="Disordered" evidence="4">
    <location>
        <begin position="29"/>
        <end position="67"/>
    </location>
</feature>
<feature type="region of interest" description="Disordered" evidence="4">
    <location>
        <begin position="178"/>
        <end position="221"/>
    </location>
</feature>
<feature type="short sequence motif" description="Nuclear localization signal" evidence="2">
    <location>
        <begin position="21"/>
        <end position="49"/>
    </location>
</feature>
<feature type="compositionally biased region" description="Polar residues" evidence="4">
    <location>
        <begin position="193"/>
        <end position="221"/>
    </location>
</feature>